<sequence length="528" mass="56528">MLSKATLLLSLPFWARVANAAFGITTTSSSYVIDANSASPLKFTVNRSNCDITSINFYGAELQYQGTGSHIGSGLGSASVSATQSGDYIKVTCSTSTLTHYFVVHNGDPIIHMATHITAEPSIGELRFIARLNNELLPNEEPFGQVSNTAGGTAIEGSDVYLVNGQTRSKFYSSERFIDDHRHCVSGSAHRVCMILNQYESSSGGPFHRDINTNNGGQYNALYWYMNSGHAQTEANRMGLHGPYSMYFSRSGTPGTNIDTSFFANLDIKGYVPANARGKVSGKASGADSTFKWVVHWYNDEAQYWTYTASDGSFTSPAMKPGTYTMVYYQGEYKVASTSVSVSAGSTTTKNISGSVTTGKTIFKIGEWDGQPTGFRNAANQLRMHPSDSRMASWGPLTYTVGSSSLSDFPMAIFKSTNSPVTIKFTASSSQTGAATLRIGTTLSFAGGRPQAKVNSFTGPVPSAPKDLNSRGVTRGAYRGFGEVYDVAIPAGTIVAGTNTITISVVSGSSGDTFLSPNFIFDCVELFQ</sequence>
<protein>
    <recommendedName>
        <fullName>Probable rhamnogalacturonate lyase A</fullName>
        <ecNumber>4.2.2.23</ecNumber>
    </recommendedName>
</protein>
<gene>
    <name type="primary">rglA</name>
    <name type="ORF">NFIA_029620</name>
</gene>
<name>RGLA_NEOFI</name>
<evidence type="ECO:0000250" key="1"/>
<evidence type="ECO:0000255" key="2"/>
<evidence type="ECO:0000305" key="3"/>
<comment type="function">
    <text evidence="1">Pectinolytic enzymes consist of four classes of enzymes: pectin lyase, polygalacturonase, pectin methylesterase and rhamnogalacturonase. Degrades the rhamnogalacturonan I (RG-I) backbone of pectin (By similarity).</text>
</comment>
<comment type="catalytic activity">
    <reaction>
        <text>Endotype eliminative cleavage of L-alpha-rhamnopyranosyl-(1-&gt;4)-alpha-D-galactopyranosyluronic acid bonds of rhamnogalacturonan I domains in ramified hairy regions of pectin leaving L-rhamnopyranose at the reducing end and 4-deoxy-4,5-unsaturated D-galactopyranosyluronic acid at the non-reducing end.</text>
        <dbReference type="EC" id="4.2.2.23"/>
    </reaction>
</comment>
<comment type="subcellular location">
    <subcellularLocation>
        <location evidence="1">Secreted</location>
    </subcellularLocation>
</comment>
<comment type="similarity">
    <text evidence="3">Belongs to the polysaccharide lyase 4 family.</text>
</comment>
<accession>A1D9P9</accession>
<feature type="signal peptide" evidence="2">
    <location>
        <begin position="1"/>
        <end position="20"/>
    </location>
</feature>
<feature type="chain" id="PRO_0000394372" description="Probable rhamnogalacturonate lyase A">
    <location>
        <begin position="21"/>
        <end position="528"/>
    </location>
</feature>
<feature type="glycosylation site" description="N-linked (GlcNAc...) asparagine" evidence="2">
    <location>
        <position position="46"/>
    </location>
</feature>
<feature type="glycosylation site" description="N-linked (GlcNAc...) asparagine" evidence="2">
    <location>
        <position position="351"/>
    </location>
</feature>
<feature type="disulfide bond" evidence="1">
    <location>
        <begin position="50"/>
        <end position="93"/>
    </location>
</feature>
<feature type="disulfide bond" evidence="1">
    <location>
        <begin position="184"/>
        <end position="193"/>
    </location>
</feature>
<dbReference type="EC" id="4.2.2.23"/>
<dbReference type="EMBL" id="DS027693">
    <property type="protein sequence ID" value="EAW20530.1"/>
    <property type="molecule type" value="Genomic_DNA"/>
</dbReference>
<dbReference type="RefSeq" id="XP_001262427.1">
    <property type="nucleotide sequence ID" value="XM_001262426.1"/>
</dbReference>
<dbReference type="SMR" id="A1D9P9"/>
<dbReference type="STRING" id="331117.A1D9P9"/>
<dbReference type="GlyCosmos" id="A1D9P9">
    <property type="glycosylation" value="2 sites, No reported glycans"/>
</dbReference>
<dbReference type="EnsemblFungi" id="EAW20530">
    <property type="protein sequence ID" value="EAW20530"/>
    <property type="gene ID" value="NFIA_029620"/>
</dbReference>
<dbReference type="GeneID" id="4589193"/>
<dbReference type="KEGG" id="nfi:NFIA_029620"/>
<dbReference type="VEuPathDB" id="FungiDB:NFIA_029620"/>
<dbReference type="eggNOG" id="ENOG502QTKY">
    <property type="taxonomic scope" value="Eukaryota"/>
</dbReference>
<dbReference type="HOGENOM" id="CLU_037882_1_1_1"/>
<dbReference type="OMA" id="FKIGDWD"/>
<dbReference type="OrthoDB" id="114708at2759"/>
<dbReference type="Proteomes" id="UP000006702">
    <property type="component" value="Unassembled WGS sequence"/>
</dbReference>
<dbReference type="GO" id="GO:0005576">
    <property type="term" value="C:extracellular region"/>
    <property type="evidence" value="ECO:0007669"/>
    <property type="project" value="UniProtKB-SubCell"/>
</dbReference>
<dbReference type="GO" id="GO:0030246">
    <property type="term" value="F:carbohydrate binding"/>
    <property type="evidence" value="ECO:0007669"/>
    <property type="project" value="InterPro"/>
</dbReference>
<dbReference type="GO" id="GO:0102210">
    <property type="term" value="F:rhamnogalacturonan endolyase activity"/>
    <property type="evidence" value="ECO:0007669"/>
    <property type="project" value="UniProtKB-EC"/>
</dbReference>
<dbReference type="GO" id="GO:0071555">
    <property type="term" value="P:cell wall organization"/>
    <property type="evidence" value="ECO:0007669"/>
    <property type="project" value="UniProtKB-KW"/>
</dbReference>
<dbReference type="GO" id="GO:0045490">
    <property type="term" value="P:pectin catabolic process"/>
    <property type="evidence" value="ECO:0007669"/>
    <property type="project" value="TreeGrafter"/>
</dbReference>
<dbReference type="CDD" id="cd10317">
    <property type="entry name" value="RGL4_C"/>
    <property type="match status" value="1"/>
</dbReference>
<dbReference type="CDD" id="cd10316">
    <property type="entry name" value="RGL4_M"/>
    <property type="match status" value="1"/>
</dbReference>
<dbReference type="CDD" id="cd10320">
    <property type="entry name" value="RGL4_N"/>
    <property type="match status" value="1"/>
</dbReference>
<dbReference type="FunFam" id="2.60.120.260:FF:000102">
    <property type="entry name" value="Rhamnogalacturonate lyase A"/>
    <property type="match status" value="1"/>
</dbReference>
<dbReference type="FunFam" id="2.60.40.1120:FF:000017">
    <property type="entry name" value="Rhamnogalacturonate lyase A"/>
    <property type="match status" value="1"/>
</dbReference>
<dbReference type="FunFam" id="2.70.98.10:FF:000020">
    <property type="entry name" value="Rhamnogalacturonate lyase A"/>
    <property type="match status" value="1"/>
</dbReference>
<dbReference type="Gene3D" id="2.70.98.10">
    <property type="match status" value="1"/>
</dbReference>
<dbReference type="Gene3D" id="2.60.40.1120">
    <property type="entry name" value="Carboxypeptidase-like, regulatory domain"/>
    <property type="match status" value="1"/>
</dbReference>
<dbReference type="Gene3D" id="2.60.120.260">
    <property type="entry name" value="Galactose-binding domain-like"/>
    <property type="match status" value="1"/>
</dbReference>
<dbReference type="InterPro" id="IPR013784">
    <property type="entry name" value="Carb-bd-like_fold"/>
</dbReference>
<dbReference type="InterPro" id="IPR011013">
    <property type="entry name" value="Gal_mutarotase_sf_dom"/>
</dbReference>
<dbReference type="InterPro" id="IPR008979">
    <property type="entry name" value="Galactose-bd-like_sf"/>
</dbReference>
<dbReference type="InterPro" id="IPR014718">
    <property type="entry name" value="GH-type_carb-bd"/>
</dbReference>
<dbReference type="InterPro" id="IPR029413">
    <property type="entry name" value="RG-lyase_II"/>
</dbReference>
<dbReference type="InterPro" id="IPR029411">
    <property type="entry name" value="RG-lyase_III"/>
</dbReference>
<dbReference type="InterPro" id="IPR016590">
    <property type="entry name" value="Rhamnogalacturonase_B"/>
</dbReference>
<dbReference type="InterPro" id="IPR015364">
    <property type="entry name" value="RhgB_N"/>
</dbReference>
<dbReference type="PANTHER" id="PTHR36574">
    <property type="entry name" value="RHAMNOGALACTURONATE LYASE-RELATED"/>
    <property type="match status" value="1"/>
</dbReference>
<dbReference type="PANTHER" id="PTHR36574:SF1">
    <property type="entry name" value="RHAMNOGALACTURONATE LYASE-RELATED"/>
    <property type="match status" value="1"/>
</dbReference>
<dbReference type="Pfam" id="PF14683">
    <property type="entry name" value="CBM-like"/>
    <property type="match status" value="1"/>
</dbReference>
<dbReference type="Pfam" id="PF14686">
    <property type="entry name" value="fn3_3"/>
    <property type="match status" value="1"/>
</dbReference>
<dbReference type="Pfam" id="PF09284">
    <property type="entry name" value="RhgB_N"/>
    <property type="match status" value="1"/>
</dbReference>
<dbReference type="PIRSF" id="PIRSF011794">
    <property type="entry name" value="Rhamnogalacturonase_B"/>
    <property type="match status" value="1"/>
</dbReference>
<dbReference type="SUPFAM" id="SSF74650">
    <property type="entry name" value="Galactose mutarotase-like"/>
    <property type="match status" value="1"/>
</dbReference>
<dbReference type="SUPFAM" id="SSF49785">
    <property type="entry name" value="Galactose-binding domain-like"/>
    <property type="match status" value="1"/>
</dbReference>
<dbReference type="SUPFAM" id="SSF49452">
    <property type="entry name" value="Starch-binding domain-like"/>
    <property type="match status" value="1"/>
</dbReference>
<organism>
    <name type="scientific">Neosartorya fischeri (strain ATCC 1020 / DSM 3700 / CBS 544.65 / FGSC A1164 / JCM 1740 / NRRL 181 / WB 181)</name>
    <name type="common">Aspergillus fischerianus</name>
    <dbReference type="NCBI Taxonomy" id="331117"/>
    <lineage>
        <taxon>Eukaryota</taxon>
        <taxon>Fungi</taxon>
        <taxon>Dikarya</taxon>
        <taxon>Ascomycota</taxon>
        <taxon>Pezizomycotina</taxon>
        <taxon>Eurotiomycetes</taxon>
        <taxon>Eurotiomycetidae</taxon>
        <taxon>Eurotiales</taxon>
        <taxon>Aspergillaceae</taxon>
        <taxon>Aspergillus</taxon>
        <taxon>Aspergillus subgen. Fumigati</taxon>
    </lineage>
</organism>
<proteinExistence type="inferred from homology"/>
<keyword id="KW-0119">Carbohydrate metabolism</keyword>
<keyword id="KW-0961">Cell wall biogenesis/degradation</keyword>
<keyword id="KW-1015">Disulfide bond</keyword>
<keyword id="KW-0325">Glycoprotein</keyword>
<keyword id="KW-0456">Lyase</keyword>
<keyword id="KW-0624">Polysaccharide degradation</keyword>
<keyword id="KW-1185">Reference proteome</keyword>
<keyword id="KW-0964">Secreted</keyword>
<keyword id="KW-0732">Signal</keyword>
<reference key="1">
    <citation type="journal article" date="2008" name="PLoS Genet.">
        <title>Genomic islands in the pathogenic filamentous fungus Aspergillus fumigatus.</title>
        <authorList>
            <person name="Fedorova N.D."/>
            <person name="Khaldi N."/>
            <person name="Joardar V.S."/>
            <person name="Maiti R."/>
            <person name="Amedeo P."/>
            <person name="Anderson M.J."/>
            <person name="Crabtree J."/>
            <person name="Silva J.C."/>
            <person name="Badger J.H."/>
            <person name="Albarraq A."/>
            <person name="Angiuoli S."/>
            <person name="Bussey H."/>
            <person name="Bowyer P."/>
            <person name="Cotty P.J."/>
            <person name="Dyer P.S."/>
            <person name="Egan A."/>
            <person name="Galens K."/>
            <person name="Fraser-Liggett C.M."/>
            <person name="Haas B.J."/>
            <person name="Inman J.M."/>
            <person name="Kent R."/>
            <person name="Lemieux S."/>
            <person name="Malavazi I."/>
            <person name="Orvis J."/>
            <person name="Roemer T."/>
            <person name="Ronning C.M."/>
            <person name="Sundaram J.P."/>
            <person name="Sutton G."/>
            <person name="Turner G."/>
            <person name="Venter J.C."/>
            <person name="White O.R."/>
            <person name="Whitty B.R."/>
            <person name="Youngman P."/>
            <person name="Wolfe K.H."/>
            <person name="Goldman G.H."/>
            <person name="Wortman J.R."/>
            <person name="Jiang B."/>
            <person name="Denning D.W."/>
            <person name="Nierman W.C."/>
        </authorList>
    </citation>
    <scope>NUCLEOTIDE SEQUENCE [LARGE SCALE GENOMIC DNA]</scope>
    <source>
        <strain>ATCC 1020 / DSM 3700 / CBS 544.65 / FGSC A1164 / JCM 1740 / NRRL 181 / WB 181</strain>
    </source>
</reference>